<dbReference type="EC" id="2.1.1.228" evidence="1"/>
<dbReference type="EMBL" id="AE017243">
    <property type="protein sequence ID" value="AAZ44368.1"/>
    <property type="molecule type" value="Genomic_DNA"/>
</dbReference>
<dbReference type="RefSeq" id="WP_011284056.1">
    <property type="nucleotide sequence ID" value="NC_007295.1"/>
</dbReference>
<dbReference type="SMR" id="Q4AA53"/>
<dbReference type="GeneID" id="41334588"/>
<dbReference type="KEGG" id="mhj:MHJ_0277"/>
<dbReference type="eggNOG" id="COG0336">
    <property type="taxonomic scope" value="Bacteria"/>
</dbReference>
<dbReference type="HOGENOM" id="CLU_047363_0_1_14"/>
<dbReference type="OrthoDB" id="9807416at2"/>
<dbReference type="Proteomes" id="UP000000548">
    <property type="component" value="Chromosome"/>
</dbReference>
<dbReference type="GO" id="GO:0005829">
    <property type="term" value="C:cytosol"/>
    <property type="evidence" value="ECO:0007669"/>
    <property type="project" value="TreeGrafter"/>
</dbReference>
<dbReference type="GO" id="GO:0052906">
    <property type="term" value="F:tRNA (guanine(37)-N1)-methyltransferase activity"/>
    <property type="evidence" value="ECO:0007669"/>
    <property type="project" value="UniProtKB-UniRule"/>
</dbReference>
<dbReference type="GO" id="GO:0002939">
    <property type="term" value="P:tRNA N1-guanine methylation"/>
    <property type="evidence" value="ECO:0007669"/>
    <property type="project" value="TreeGrafter"/>
</dbReference>
<dbReference type="CDD" id="cd18080">
    <property type="entry name" value="TrmD-like"/>
    <property type="match status" value="1"/>
</dbReference>
<dbReference type="FunFam" id="3.40.1280.10:FF:000001">
    <property type="entry name" value="tRNA (guanine-N(1)-)-methyltransferase"/>
    <property type="match status" value="1"/>
</dbReference>
<dbReference type="Gene3D" id="3.40.1280.10">
    <property type="match status" value="1"/>
</dbReference>
<dbReference type="Gene3D" id="1.10.1270.20">
    <property type="entry name" value="tRNA(m1g37)methyltransferase, domain 2"/>
    <property type="match status" value="1"/>
</dbReference>
<dbReference type="HAMAP" id="MF_00605">
    <property type="entry name" value="TrmD"/>
    <property type="match status" value="1"/>
</dbReference>
<dbReference type="InterPro" id="IPR029028">
    <property type="entry name" value="Alpha/beta_knot_MTases"/>
</dbReference>
<dbReference type="InterPro" id="IPR023148">
    <property type="entry name" value="tRNA_m1G_MeTrfase_C_sf"/>
</dbReference>
<dbReference type="InterPro" id="IPR002649">
    <property type="entry name" value="tRNA_m1G_MeTrfase_TrmD"/>
</dbReference>
<dbReference type="InterPro" id="IPR029026">
    <property type="entry name" value="tRNA_m1G_MTases_N"/>
</dbReference>
<dbReference type="InterPro" id="IPR016009">
    <property type="entry name" value="tRNA_MeTrfase_TRMD/TRM10"/>
</dbReference>
<dbReference type="NCBIfam" id="NF000648">
    <property type="entry name" value="PRK00026.1"/>
    <property type="match status" value="1"/>
</dbReference>
<dbReference type="NCBIfam" id="TIGR00088">
    <property type="entry name" value="trmD"/>
    <property type="match status" value="1"/>
</dbReference>
<dbReference type="PANTHER" id="PTHR46417">
    <property type="entry name" value="TRNA (GUANINE-N(1)-)-METHYLTRANSFERASE"/>
    <property type="match status" value="1"/>
</dbReference>
<dbReference type="PANTHER" id="PTHR46417:SF1">
    <property type="entry name" value="TRNA (GUANINE-N(1)-)-METHYLTRANSFERASE"/>
    <property type="match status" value="1"/>
</dbReference>
<dbReference type="Pfam" id="PF01746">
    <property type="entry name" value="tRNA_m1G_MT"/>
    <property type="match status" value="1"/>
</dbReference>
<dbReference type="PIRSF" id="PIRSF000386">
    <property type="entry name" value="tRNA_mtase"/>
    <property type="match status" value="1"/>
</dbReference>
<dbReference type="SUPFAM" id="SSF75217">
    <property type="entry name" value="alpha/beta knot"/>
    <property type="match status" value="1"/>
</dbReference>
<evidence type="ECO:0000255" key="1">
    <source>
        <dbReference type="HAMAP-Rule" id="MF_00605"/>
    </source>
</evidence>
<protein>
    <recommendedName>
        <fullName evidence="1">tRNA (guanine-N(1)-)-methyltransferase</fullName>
        <ecNumber evidence="1">2.1.1.228</ecNumber>
    </recommendedName>
    <alternativeName>
        <fullName evidence="1">M1G-methyltransferase</fullName>
    </alternativeName>
    <alternativeName>
        <fullName evidence="1">tRNA [GM37] methyltransferase</fullName>
    </alternativeName>
</protein>
<gene>
    <name evidence="1" type="primary">trmD</name>
    <name type="ordered locus">MHJ_0277</name>
</gene>
<comment type="function">
    <text evidence="1">Specifically methylates guanosine-37 in various tRNAs.</text>
</comment>
<comment type="catalytic activity">
    <reaction evidence="1">
        <text>guanosine(37) in tRNA + S-adenosyl-L-methionine = N(1)-methylguanosine(37) in tRNA + S-adenosyl-L-homocysteine + H(+)</text>
        <dbReference type="Rhea" id="RHEA:36899"/>
        <dbReference type="Rhea" id="RHEA-COMP:10145"/>
        <dbReference type="Rhea" id="RHEA-COMP:10147"/>
        <dbReference type="ChEBI" id="CHEBI:15378"/>
        <dbReference type="ChEBI" id="CHEBI:57856"/>
        <dbReference type="ChEBI" id="CHEBI:59789"/>
        <dbReference type="ChEBI" id="CHEBI:73542"/>
        <dbReference type="ChEBI" id="CHEBI:74269"/>
        <dbReference type="EC" id="2.1.1.228"/>
    </reaction>
</comment>
<comment type="subunit">
    <text evidence="1">Homodimer.</text>
</comment>
<comment type="subcellular location">
    <subcellularLocation>
        <location evidence="1">Cytoplasm</location>
    </subcellularLocation>
</comment>
<comment type="similarity">
    <text evidence="1">Belongs to the RNA methyltransferase TrmD family.</text>
</comment>
<accession>Q4AA53</accession>
<reference key="1">
    <citation type="journal article" date="2005" name="J. Bacteriol.">
        <title>Swine and poultry pathogens: the complete genome sequences of two strains of Mycoplasma hyopneumoniae and a strain of Mycoplasma synoviae.</title>
        <authorList>
            <person name="Vasconcelos A.T.R."/>
            <person name="Ferreira H.B."/>
            <person name="Bizarro C.V."/>
            <person name="Bonatto S.L."/>
            <person name="Carvalho M.O."/>
            <person name="Pinto P.M."/>
            <person name="Almeida D.F."/>
            <person name="Almeida L.G.P."/>
            <person name="Almeida R."/>
            <person name="Alves-Junior L."/>
            <person name="Assuncao E.N."/>
            <person name="Azevedo V.A.C."/>
            <person name="Bogo M.R."/>
            <person name="Brigido M.M."/>
            <person name="Brocchi M."/>
            <person name="Burity H.A."/>
            <person name="Camargo A.A."/>
            <person name="Camargo S.S."/>
            <person name="Carepo M.S."/>
            <person name="Carraro D.M."/>
            <person name="de Mattos Cascardo J.C."/>
            <person name="Castro L.A."/>
            <person name="Cavalcanti G."/>
            <person name="Chemale G."/>
            <person name="Collevatti R.G."/>
            <person name="Cunha C.W."/>
            <person name="Dallagiovanna B."/>
            <person name="Dambros B.P."/>
            <person name="Dellagostin O.A."/>
            <person name="Falcao C."/>
            <person name="Fantinatti-Garboggini F."/>
            <person name="Felipe M.S.S."/>
            <person name="Fiorentin L."/>
            <person name="Franco G.R."/>
            <person name="Freitas N.S.A."/>
            <person name="Frias D."/>
            <person name="Grangeiro T.B."/>
            <person name="Grisard E.C."/>
            <person name="Guimaraes C.T."/>
            <person name="Hungria M."/>
            <person name="Jardim S.N."/>
            <person name="Krieger M.A."/>
            <person name="Laurino J.P."/>
            <person name="Lima L.F.A."/>
            <person name="Lopes M.I."/>
            <person name="Loreto E.L.S."/>
            <person name="Madeira H.M.F."/>
            <person name="Manfio G.P."/>
            <person name="Maranhao A.Q."/>
            <person name="Martinkovics C.T."/>
            <person name="Medeiros S.R.B."/>
            <person name="Moreira M.A.M."/>
            <person name="Neiva M."/>
            <person name="Ramalho-Neto C.E."/>
            <person name="Nicolas M.F."/>
            <person name="Oliveira S.C."/>
            <person name="Paixao R.F.C."/>
            <person name="Pedrosa F.O."/>
            <person name="Pena S.D.J."/>
            <person name="Pereira M."/>
            <person name="Pereira-Ferrari L."/>
            <person name="Piffer I."/>
            <person name="Pinto L.S."/>
            <person name="Potrich D.P."/>
            <person name="Salim A.C.M."/>
            <person name="Santos F.R."/>
            <person name="Schmitt R."/>
            <person name="Schneider M.P.C."/>
            <person name="Schrank A."/>
            <person name="Schrank I.S."/>
            <person name="Schuck A.F."/>
            <person name="Seuanez H.N."/>
            <person name="Silva D.W."/>
            <person name="Silva R."/>
            <person name="Silva S.C."/>
            <person name="Soares C.M.A."/>
            <person name="Souza K.R.L."/>
            <person name="Souza R.C."/>
            <person name="Staats C.C."/>
            <person name="Steffens M.B.R."/>
            <person name="Teixeira S.M.R."/>
            <person name="Urmenyi T.P."/>
            <person name="Vainstein M.H."/>
            <person name="Zuccherato L.W."/>
            <person name="Simpson A.J.G."/>
            <person name="Zaha A."/>
        </authorList>
    </citation>
    <scope>NUCLEOTIDE SEQUENCE [LARGE SCALE GENOMIC DNA]</scope>
    <source>
        <strain>J / ATCC 25934 / NCTC 10110</strain>
    </source>
</reference>
<keyword id="KW-0963">Cytoplasm</keyword>
<keyword id="KW-0489">Methyltransferase</keyword>
<keyword id="KW-0949">S-adenosyl-L-methionine</keyword>
<keyword id="KW-0808">Transferase</keyword>
<keyword id="KW-0819">tRNA processing</keyword>
<organism>
    <name type="scientific">Mesomycoplasma hyopneumoniae (strain J / ATCC 25934 / NCTC 10110)</name>
    <name type="common">Mycoplasma hyopneumoniae</name>
    <dbReference type="NCBI Taxonomy" id="262719"/>
    <lineage>
        <taxon>Bacteria</taxon>
        <taxon>Bacillati</taxon>
        <taxon>Mycoplasmatota</taxon>
        <taxon>Mycoplasmoidales</taxon>
        <taxon>Metamycoplasmataceae</taxon>
        <taxon>Mesomycoplasma</taxon>
    </lineage>
</organism>
<name>TRMD_MESHJ</name>
<feature type="chain" id="PRO_0000257435" description="tRNA (guanine-N(1)-)-methyltransferase">
    <location>
        <begin position="1"/>
        <end position="227"/>
    </location>
</feature>
<feature type="binding site" evidence="1">
    <location>
        <position position="107"/>
    </location>
    <ligand>
        <name>S-adenosyl-L-methionine</name>
        <dbReference type="ChEBI" id="CHEBI:59789"/>
    </ligand>
</feature>
<feature type="binding site" evidence="1">
    <location>
        <begin position="127"/>
        <end position="132"/>
    </location>
    <ligand>
        <name>S-adenosyl-L-methionine</name>
        <dbReference type="ChEBI" id="CHEBI:59789"/>
    </ligand>
</feature>
<sequence length="227" mass="26121">MKINILTLFPRYFEVFCRESIIGKAIKQKKITINVVNFRDFSKNKHKKVDDYVYGGGPGLLLQIQPVVDALEKVGGLKIALSPQGQKFDQSVARKLAKEDEITILCGHYEGFDQRIIDNFIDFELSLGDFILTGGEIAAMAIIDAIIRLKPDIINPESLKNETFNDFLLDFPQYSRPANFRGLEVPKVLISGNHREIGEWRQEQRELITKKKRPDLWEKFLKIKNKK</sequence>
<proteinExistence type="inferred from homology"/>